<protein>
    <recommendedName>
        <fullName evidence="1">Small ribosomal subunit protein bS18c</fullName>
    </recommendedName>
    <alternativeName>
        <fullName evidence="2">30S ribosomal protein S18, chloroplastic</fullName>
    </alternativeName>
</protein>
<geneLocation type="chloroplast"/>
<gene>
    <name evidence="1" type="primary">rps18</name>
</gene>
<name>RR18_PHYPA</name>
<accession>Q6YXM4</accession>
<reference key="1">
    <citation type="journal article" date="2003" name="Nucleic Acids Res.">
        <title>Complete chloroplast DNA sequence of the moss Physcomitrella patens: evidence for the loss and relocation of rpoA from the chloroplast to the nucleus.</title>
        <authorList>
            <person name="Sugiura C."/>
            <person name="Kobayashi Y."/>
            <person name="Setsuyuki A."/>
            <person name="Sugita C."/>
            <person name="Sugita M."/>
        </authorList>
    </citation>
    <scope>NUCLEOTIDE SEQUENCE [LARGE SCALE GENOMIC DNA]</scope>
    <source>
        <strain>cv. Gransden 2004</strain>
    </source>
</reference>
<sequence length="79" mass="9361">MKQAINKSKRSSRRRLPPIRSGEIIDYKNINLLRRFISEQGKILSRRMNRLTSKQQRLMTIAIKRARVLALLPFLNNEN</sequence>
<keyword id="KW-0150">Chloroplast</keyword>
<keyword id="KW-0934">Plastid</keyword>
<keyword id="KW-1185">Reference proteome</keyword>
<keyword id="KW-0687">Ribonucleoprotein</keyword>
<keyword id="KW-0689">Ribosomal protein</keyword>
<keyword id="KW-0694">RNA-binding</keyword>
<keyword id="KW-0699">rRNA-binding</keyword>
<dbReference type="EMBL" id="AP005672">
    <property type="protein sequence ID" value="BAC85028.1"/>
    <property type="molecule type" value="Genomic_DNA"/>
</dbReference>
<dbReference type="RefSeq" id="NP_904178.3">
    <property type="nucleotide sequence ID" value="NC_005087.2"/>
</dbReference>
<dbReference type="RefSeq" id="YP_009477509.1">
    <property type="nucleotide sequence ID" value="NC_037465.1"/>
</dbReference>
<dbReference type="SMR" id="Q6YXM4"/>
<dbReference type="FunCoup" id="Q6YXM4">
    <property type="interactions" value="1549"/>
</dbReference>
<dbReference type="STRING" id="3218.Q6YXM4"/>
<dbReference type="GeneID" id="2546813"/>
<dbReference type="GeneID" id="36487121"/>
<dbReference type="KEGG" id="ppp:2546813"/>
<dbReference type="InParanoid" id="Q6YXM4"/>
<dbReference type="OrthoDB" id="21463at2759"/>
<dbReference type="Proteomes" id="UP000006727">
    <property type="component" value="Chloroplast"/>
</dbReference>
<dbReference type="GO" id="GO:0009507">
    <property type="term" value="C:chloroplast"/>
    <property type="evidence" value="ECO:0007669"/>
    <property type="project" value="UniProtKB-SubCell"/>
</dbReference>
<dbReference type="GO" id="GO:0005763">
    <property type="term" value="C:mitochondrial small ribosomal subunit"/>
    <property type="evidence" value="ECO:0000318"/>
    <property type="project" value="GO_Central"/>
</dbReference>
<dbReference type="GO" id="GO:0070181">
    <property type="term" value="F:small ribosomal subunit rRNA binding"/>
    <property type="evidence" value="ECO:0000318"/>
    <property type="project" value="GO_Central"/>
</dbReference>
<dbReference type="GO" id="GO:0003735">
    <property type="term" value="F:structural constituent of ribosome"/>
    <property type="evidence" value="ECO:0000318"/>
    <property type="project" value="GO_Central"/>
</dbReference>
<dbReference type="GO" id="GO:0006412">
    <property type="term" value="P:translation"/>
    <property type="evidence" value="ECO:0000318"/>
    <property type="project" value="GO_Central"/>
</dbReference>
<dbReference type="FunFam" id="4.10.640.10:FF:000002">
    <property type="entry name" value="30S ribosomal protein S18, chloroplastic"/>
    <property type="match status" value="1"/>
</dbReference>
<dbReference type="Gene3D" id="4.10.640.10">
    <property type="entry name" value="Ribosomal protein S18"/>
    <property type="match status" value="1"/>
</dbReference>
<dbReference type="HAMAP" id="MF_00270">
    <property type="entry name" value="Ribosomal_bS18"/>
    <property type="match status" value="1"/>
</dbReference>
<dbReference type="InterPro" id="IPR001648">
    <property type="entry name" value="Ribosomal_bS18"/>
</dbReference>
<dbReference type="InterPro" id="IPR018275">
    <property type="entry name" value="Ribosomal_bS18_CS"/>
</dbReference>
<dbReference type="InterPro" id="IPR036870">
    <property type="entry name" value="Ribosomal_bS18_sf"/>
</dbReference>
<dbReference type="NCBIfam" id="TIGR00165">
    <property type="entry name" value="S18"/>
    <property type="match status" value="1"/>
</dbReference>
<dbReference type="PANTHER" id="PTHR13479">
    <property type="entry name" value="30S RIBOSOMAL PROTEIN S18"/>
    <property type="match status" value="1"/>
</dbReference>
<dbReference type="PANTHER" id="PTHR13479:SF40">
    <property type="entry name" value="SMALL RIBOSOMAL SUBUNIT PROTEIN BS18M"/>
    <property type="match status" value="1"/>
</dbReference>
<dbReference type="Pfam" id="PF01084">
    <property type="entry name" value="Ribosomal_S18"/>
    <property type="match status" value="1"/>
</dbReference>
<dbReference type="PRINTS" id="PR00974">
    <property type="entry name" value="RIBOSOMALS18"/>
</dbReference>
<dbReference type="SUPFAM" id="SSF46911">
    <property type="entry name" value="Ribosomal protein S18"/>
    <property type="match status" value="1"/>
</dbReference>
<dbReference type="PROSITE" id="PS00057">
    <property type="entry name" value="RIBOSOMAL_S18"/>
    <property type="match status" value="1"/>
</dbReference>
<proteinExistence type="inferred from homology"/>
<feature type="chain" id="PRO_0000111303" description="Small ribosomal subunit protein bS18c">
    <location>
        <begin position="1"/>
        <end position="79"/>
    </location>
</feature>
<comment type="subunit">
    <text>Part of the 30S ribosomal subunit.</text>
</comment>
<comment type="subcellular location">
    <subcellularLocation>
        <location>Plastid</location>
        <location>Chloroplast</location>
    </subcellularLocation>
</comment>
<comment type="similarity">
    <text evidence="1">Belongs to the bacterial ribosomal protein bS18 family.</text>
</comment>
<organism>
    <name type="scientific">Physcomitrium patens</name>
    <name type="common">Spreading-leaved earth moss</name>
    <name type="synonym">Physcomitrella patens</name>
    <dbReference type="NCBI Taxonomy" id="3218"/>
    <lineage>
        <taxon>Eukaryota</taxon>
        <taxon>Viridiplantae</taxon>
        <taxon>Streptophyta</taxon>
        <taxon>Embryophyta</taxon>
        <taxon>Bryophyta</taxon>
        <taxon>Bryophytina</taxon>
        <taxon>Bryopsida</taxon>
        <taxon>Funariidae</taxon>
        <taxon>Funariales</taxon>
        <taxon>Funariaceae</taxon>
        <taxon>Physcomitrium</taxon>
    </lineage>
</organism>
<evidence type="ECO:0000255" key="1">
    <source>
        <dbReference type="HAMAP-Rule" id="MF_00270"/>
    </source>
</evidence>
<evidence type="ECO:0000305" key="2"/>